<accession>Q4URF6</accession>
<keyword id="KW-0687">Ribonucleoprotein</keyword>
<keyword id="KW-0689">Ribosomal protein</keyword>
<keyword id="KW-0694">RNA-binding</keyword>
<keyword id="KW-0699">rRNA-binding</keyword>
<reference key="1">
    <citation type="journal article" date="2005" name="Genome Res.">
        <title>Comparative and functional genomic analyses of the pathogenicity of phytopathogen Xanthomonas campestris pv. campestris.</title>
        <authorList>
            <person name="Qian W."/>
            <person name="Jia Y."/>
            <person name="Ren S.-X."/>
            <person name="He Y.-Q."/>
            <person name="Feng J.-X."/>
            <person name="Lu L.-F."/>
            <person name="Sun Q."/>
            <person name="Ying G."/>
            <person name="Tang D.-J."/>
            <person name="Tang H."/>
            <person name="Wu W."/>
            <person name="Hao P."/>
            <person name="Wang L."/>
            <person name="Jiang B.-L."/>
            <person name="Zeng S."/>
            <person name="Gu W.-Y."/>
            <person name="Lu G."/>
            <person name="Rong L."/>
            <person name="Tian Y."/>
            <person name="Yao Z."/>
            <person name="Fu G."/>
            <person name="Chen B."/>
            <person name="Fang R."/>
            <person name="Qiang B."/>
            <person name="Chen Z."/>
            <person name="Zhao G.-P."/>
            <person name="Tang J.-L."/>
            <person name="He C."/>
        </authorList>
    </citation>
    <scope>NUCLEOTIDE SEQUENCE [LARGE SCALE GENOMIC DNA]</scope>
    <source>
        <strain>8004</strain>
    </source>
</reference>
<organism>
    <name type="scientific">Xanthomonas campestris pv. campestris (strain 8004)</name>
    <dbReference type="NCBI Taxonomy" id="314565"/>
    <lineage>
        <taxon>Bacteria</taxon>
        <taxon>Pseudomonadati</taxon>
        <taxon>Pseudomonadota</taxon>
        <taxon>Gammaproteobacteria</taxon>
        <taxon>Lysobacterales</taxon>
        <taxon>Lysobacteraceae</taxon>
        <taxon>Xanthomonas</taxon>
    </lineage>
</organism>
<protein>
    <recommendedName>
        <fullName evidence="1">Small ribosomal subunit protein uS5</fullName>
    </recommendedName>
    <alternativeName>
        <fullName evidence="2">30S ribosomal protein S5</fullName>
    </alternativeName>
</protein>
<sequence>MAEERAPRGRDRDRNREEKVDDGMIEKLVAVNRVSKTVKGGRQFTFTALTVVGDGLGKVGFGYGKAREVPVAIQKSMEQARKNLATVDLNNGTLWHAVKSGHGAARVYMQPASEGTGVIAGGAMRAVLEAVGVKNVLAKAVGSRNPINLVRATLKGLSEVQSPARVAAKRGKKVEELNHG</sequence>
<name>RS5_XANC8</name>
<evidence type="ECO:0000255" key="1">
    <source>
        <dbReference type="HAMAP-Rule" id="MF_01307"/>
    </source>
</evidence>
<evidence type="ECO:0000305" key="2"/>
<gene>
    <name evidence="1" type="primary">rpsE</name>
    <name type="ordered locus">XC_3323</name>
</gene>
<proteinExistence type="inferred from homology"/>
<comment type="function">
    <text evidence="1">With S4 and S12 plays an important role in translational accuracy.</text>
</comment>
<comment type="function">
    <text evidence="1">Located at the back of the 30S subunit body where it stabilizes the conformation of the head with respect to the body.</text>
</comment>
<comment type="subunit">
    <text evidence="1">Part of the 30S ribosomal subunit. Contacts proteins S4 and S8.</text>
</comment>
<comment type="domain">
    <text>The N-terminal domain interacts with the head of the 30S subunit; the C-terminal domain interacts with the body and contacts protein S4. The interaction surface between S4 and S5 is involved in control of translational fidelity.</text>
</comment>
<comment type="similarity">
    <text evidence="1">Belongs to the universal ribosomal protein uS5 family.</text>
</comment>
<feature type="chain" id="PRO_0000230381" description="Small ribosomal subunit protein uS5">
    <location>
        <begin position="1"/>
        <end position="180"/>
    </location>
</feature>
<feature type="domain" description="S5 DRBM" evidence="1">
    <location>
        <begin position="24"/>
        <end position="87"/>
    </location>
</feature>
<dbReference type="EMBL" id="CP000050">
    <property type="protein sequence ID" value="AAY50367.1"/>
    <property type="molecule type" value="Genomic_DNA"/>
</dbReference>
<dbReference type="RefSeq" id="WP_003486682.1">
    <property type="nucleotide sequence ID" value="NZ_CP155948.1"/>
</dbReference>
<dbReference type="SMR" id="Q4URF6"/>
<dbReference type="GeneID" id="97509353"/>
<dbReference type="KEGG" id="xcb:XC_3323"/>
<dbReference type="HOGENOM" id="CLU_065898_2_2_6"/>
<dbReference type="Proteomes" id="UP000000420">
    <property type="component" value="Chromosome"/>
</dbReference>
<dbReference type="GO" id="GO:0015935">
    <property type="term" value="C:small ribosomal subunit"/>
    <property type="evidence" value="ECO:0007669"/>
    <property type="project" value="InterPro"/>
</dbReference>
<dbReference type="GO" id="GO:0019843">
    <property type="term" value="F:rRNA binding"/>
    <property type="evidence" value="ECO:0007669"/>
    <property type="project" value="UniProtKB-UniRule"/>
</dbReference>
<dbReference type="GO" id="GO:0003735">
    <property type="term" value="F:structural constituent of ribosome"/>
    <property type="evidence" value="ECO:0007669"/>
    <property type="project" value="InterPro"/>
</dbReference>
<dbReference type="GO" id="GO:0006412">
    <property type="term" value="P:translation"/>
    <property type="evidence" value="ECO:0007669"/>
    <property type="project" value="UniProtKB-UniRule"/>
</dbReference>
<dbReference type="FunFam" id="3.30.160.20:FF:000001">
    <property type="entry name" value="30S ribosomal protein S5"/>
    <property type="match status" value="1"/>
</dbReference>
<dbReference type="FunFam" id="3.30.230.10:FF:000002">
    <property type="entry name" value="30S ribosomal protein S5"/>
    <property type="match status" value="1"/>
</dbReference>
<dbReference type="Gene3D" id="3.30.160.20">
    <property type="match status" value="1"/>
</dbReference>
<dbReference type="Gene3D" id="3.30.230.10">
    <property type="match status" value="1"/>
</dbReference>
<dbReference type="HAMAP" id="MF_01307_B">
    <property type="entry name" value="Ribosomal_uS5_B"/>
    <property type="match status" value="1"/>
</dbReference>
<dbReference type="InterPro" id="IPR020568">
    <property type="entry name" value="Ribosomal_Su5_D2-typ_SF"/>
</dbReference>
<dbReference type="InterPro" id="IPR000851">
    <property type="entry name" value="Ribosomal_uS5"/>
</dbReference>
<dbReference type="InterPro" id="IPR005712">
    <property type="entry name" value="Ribosomal_uS5_bac-type"/>
</dbReference>
<dbReference type="InterPro" id="IPR005324">
    <property type="entry name" value="Ribosomal_uS5_C"/>
</dbReference>
<dbReference type="InterPro" id="IPR013810">
    <property type="entry name" value="Ribosomal_uS5_N"/>
</dbReference>
<dbReference type="InterPro" id="IPR018192">
    <property type="entry name" value="Ribosomal_uS5_N_CS"/>
</dbReference>
<dbReference type="InterPro" id="IPR014721">
    <property type="entry name" value="Ribsml_uS5_D2-typ_fold_subgr"/>
</dbReference>
<dbReference type="NCBIfam" id="TIGR01021">
    <property type="entry name" value="rpsE_bact"/>
    <property type="match status" value="1"/>
</dbReference>
<dbReference type="PANTHER" id="PTHR48277">
    <property type="entry name" value="MITOCHONDRIAL RIBOSOMAL PROTEIN S5"/>
    <property type="match status" value="1"/>
</dbReference>
<dbReference type="PANTHER" id="PTHR48277:SF1">
    <property type="entry name" value="MITOCHONDRIAL RIBOSOMAL PROTEIN S5"/>
    <property type="match status" value="1"/>
</dbReference>
<dbReference type="Pfam" id="PF00333">
    <property type="entry name" value="Ribosomal_S5"/>
    <property type="match status" value="1"/>
</dbReference>
<dbReference type="Pfam" id="PF03719">
    <property type="entry name" value="Ribosomal_S5_C"/>
    <property type="match status" value="1"/>
</dbReference>
<dbReference type="SUPFAM" id="SSF54768">
    <property type="entry name" value="dsRNA-binding domain-like"/>
    <property type="match status" value="1"/>
</dbReference>
<dbReference type="SUPFAM" id="SSF54211">
    <property type="entry name" value="Ribosomal protein S5 domain 2-like"/>
    <property type="match status" value="1"/>
</dbReference>
<dbReference type="PROSITE" id="PS00585">
    <property type="entry name" value="RIBOSOMAL_S5"/>
    <property type="match status" value="1"/>
</dbReference>
<dbReference type="PROSITE" id="PS50881">
    <property type="entry name" value="S5_DSRBD"/>
    <property type="match status" value="1"/>
</dbReference>